<organism>
    <name type="scientific">Rhodobacter capsulatus</name>
    <name type="common">Rhodopseudomonas capsulata</name>
    <dbReference type="NCBI Taxonomy" id="1061"/>
    <lineage>
        <taxon>Bacteria</taxon>
        <taxon>Pseudomonadati</taxon>
        <taxon>Pseudomonadota</taxon>
        <taxon>Alphaproteobacteria</taxon>
        <taxon>Rhodobacterales</taxon>
        <taxon>Rhodobacter group</taxon>
        <taxon>Rhodobacter</taxon>
    </lineage>
</organism>
<dbReference type="EC" id="2.5.1.84"/>
<dbReference type="EMBL" id="AB001997">
    <property type="protein sequence ID" value="BAA22867.1"/>
    <property type="molecule type" value="Genomic_DNA"/>
</dbReference>
<dbReference type="SMR" id="O24743"/>
<dbReference type="BioCyc" id="MetaCyc:MONOMER-13766"/>
<dbReference type="GO" id="GO:0052923">
    <property type="term" value="F:all-trans-nonaprenyl-diphosphate synthase (geranyl-diphosphate specific) activity"/>
    <property type="evidence" value="ECO:0007669"/>
    <property type="project" value="UniProtKB-EC"/>
</dbReference>
<dbReference type="GO" id="GO:0046872">
    <property type="term" value="F:metal ion binding"/>
    <property type="evidence" value="ECO:0007669"/>
    <property type="project" value="UniProtKB-KW"/>
</dbReference>
<dbReference type="GO" id="GO:0008299">
    <property type="term" value="P:isoprenoid biosynthetic process"/>
    <property type="evidence" value="ECO:0007669"/>
    <property type="project" value="InterPro"/>
</dbReference>
<dbReference type="GO" id="GO:0006744">
    <property type="term" value="P:ubiquinone biosynthetic process"/>
    <property type="evidence" value="ECO:0007669"/>
    <property type="project" value="UniProtKB-KW"/>
</dbReference>
<dbReference type="CDD" id="cd00685">
    <property type="entry name" value="Trans_IPPS_HT"/>
    <property type="match status" value="1"/>
</dbReference>
<dbReference type="Gene3D" id="1.10.600.10">
    <property type="entry name" value="Farnesyl Diphosphate Synthase"/>
    <property type="match status" value="1"/>
</dbReference>
<dbReference type="InterPro" id="IPR008949">
    <property type="entry name" value="Isoprenoid_synthase_dom_sf"/>
</dbReference>
<dbReference type="InterPro" id="IPR000092">
    <property type="entry name" value="Polyprenyl_synt"/>
</dbReference>
<dbReference type="InterPro" id="IPR033749">
    <property type="entry name" value="Polyprenyl_synt_CS"/>
</dbReference>
<dbReference type="PANTHER" id="PTHR12001:SF69">
    <property type="entry name" value="ALL TRANS-POLYPRENYL-DIPHOSPHATE SYNTHASE PDSS1"/>
    <property type="match status" value="1"/>
</dbReference>
<dbReference type="PANTHER" id="PTHR12001">
    <property type="entry name" value="GERANYLGERANYL PYROPHOSPHATE SYNTHASE"/>
    <property type="match status" value="1"/>
</dbReference>
<dbReference type="Pfam" id="PF00348">
    <property type="entry name" value="polyprenyl_synt"/>
    <property type="match status" value="1"/>
</dbReference>
<dbReference type="SFLD" id="SFLDS00005">
    <property type="entry name" value="Isoprenoid_Synthase_Type_I"/>
    <property type="match status" value="1"/>
</dbReference>
<dbReference type="SUPFAM" id="SSF48576">
    <property type="entry name" value="Terpenoid synthases"/>
    <property type="match status" value="1"/>
</dbReference>
<dbReference type="PROSITE" id="PS00723">
    <property type="entry name" value="POLYPRENYL_SYNTHASE_1"/>
    <property type="match status" value="1"/>
</dbReference>
<dbReference type="PROSITE" id="PS00444">
    <property type="entry name" value="POLYPRENYL_SYNTHASE_2"/>
    <property type="match status" value="1"/>
</dbReference>
<name>SDSA_RHOCA</name>
<feature type="chain" id="PRO_0000419190" description="All-trans-nonaprenyl-diphosphate synthase (geranyl-diphosphate specific)">
    <location>
        <begin position="1"/>
        <end position="325"/>
    </location>
</feature>
<feature type="binding site" evidence="2">
    <location>
        <position position="48"/>
    </location>
    <ligand>
        <name>isopentenyl diphosphate</name>
        <dbReference type="ChEBI" id="CHEBI:128769"/>
    </ligand>
</feature>
<feature type="binding site" evidence="2">
    <location>
        <position position="51"/>
    </location>
    <ligand>
        <name>isopentenyl diphosphate</name>
        <dbReference type="ChEBI" id="CHEBI:128769"/>
    </ligand>
</feature>
<feature type="binding site" evidence="3">
    <location>
        <position position="81"/>
    </location>
    <ligand>
        <name>isopentenyl diphosphate</name>
        <dbReference type="ChEBI" id="CHEBI:128769"/>
    </ligand>
</feature>
<feature type="binding site" evidence="2">
    <location>
        <position position="88"/>
    </location>
    <ligand>
        <name>Mg(2+)</name>
        <dbReference type="ChEBI" id="CHEBI:18420"/>
        <label>1</label>
    </ligand>
</feature>
<feature type="binding site" evidence="2">
    <location>
        <position position="88"/>
    </location>
    <ligand>
        <name>Mg(2+)</name>
        <dbReference type="ChEBI" id="CHEBI:18420"/>
        <label>2</label>
    </ligand>
</feature>
<feature type="binding site" evidence="2">
    <location>
        <position position="92"/>
    </location>
    <ligand>
        <name>Mg(2+)</name>
        <dbReference type="ChEBI" id="CHEBI:18420"/>
        <label>1</label>
    </ligand>
</feature>
<feature type="binding site" evidence="2">
    <location>
        <position position="92"/>
    </location>
    <ligand>
        <name>Mg(2+)</name>
        <dbReference type="ChEBI" id="CHEBI:18420"/>
        <label>2</label>
    </ligand>
</feature>
<feature type="binding site" evidence="1">
    <location>
        <position position="97"/>
    </location>
    <ligand>
        <name>an all-trans-polyprenyl diphosphate</name>
        <dbReference type="ChEBI" id="CHEBI:58914"/>
    </ligand>
</feature>
<feature type="binding site" evidence="2">
    <location>
        <position position="98"/>
    </location>
    <ligand>
        <name>isopentenyl diphosphate</name>
        <dbReference type="ChEBI" id="CHEBI:128769"/>
    </ligand>
</feature>
<feature type="binding site" evidence="1">
    <location>
        <position position="174"/>
    </location>
    <ligand>
        <name>an all-trans-polyprenyl diphosphate</name>
        <dbReference type="ChEBI" id="CHEBI:58914"/>
    </ligand>
</feature>
<feature type="binding site" evidence="1">
    <location>
        <position position="175"/>
    </location>
    <ligand>
        <name>an all-trans-polyprenyl diphosphate</name>
        <dbReference type="ChEBI" id="CHEBI:58914"/>
    </ligand>
</feature>
<feature type="binding site" evidence="1">
    <location>
        <position position="211"/>
    </location>
    <ligand>
        <name>an all-trans-polyprenyl diphosphate</name>
        <dbReference type="ChEBI" id="CHEBI:58914"/>
    </ligand>
</feature>
<feature type="binding site" evidence="1">
    <location>
        <position position="228"/>
    </location>
    <ligand>
        <name>an all-trans-polyprenyl diphosphate</name>
        <dbReference type="ChEBI" id="CHEBI:58914"/>
    </ligand>
</feature>
<evidence type="ECO:0000250" key="1"/>
<evidence type="ECO:0000250" key="2">
    <source>
        <dbReference type="UniProtKB" id="P14324"/>
    </source>
</evidence>
<evidence type="ECO:0000250" key="3">
    <source>
        <dbReference type="UniProtKB" id="Q12051"/>
    </source>
</evidence>
<evidence type="ECO:0000269" key="4">
    <source>
    </source>
</evidence>
<evidence type="ECO:0000305" key="5"/>
<proteinExistence type="evidence at protein level"/>
<comment type="function">
    <text evidence="4">catalyzes the sequential condensation of isopentenyl diphosphate (IPP) with the allylic substrate to give solanesyl diphosphate. Could be important to determine the side chain length of ubiquinone.</text>
</comment>
<comment type="catalytic activity">
    <reaction evidence="4">
        <text>7 isopentenyl diphosphate + (2E)-geranyl diphosphate = all-trans-nonaprenyl diphosphate + 7 diphosphate</text>
        <dbReference type="Rhea" id="RHEA:27563"/>
        <dbReference type="ChEBI" id="CHEBI:33019"/>
        <dbReference type="ChEBI" id="CHEBI:58057"/>
        <dbReference type="ChEBI" id="CHEBI:58391"/>
        <dbReference type="ChEBI" id="CHEBI:128769"/>
        <dbReference type="EC" id="2.5.1.84"/>
    </reaction>
</comment>
<comment type="cofactor">
    <cofactor evidence="1">
        <name>Mg(2+)</name>
        <dbReference type="ChEBI" id="CHEBI:18420"/>
    </cofactor>
    <text evidence="1">Binds 2 Mg(2+) ions per subunit.</text>
</comment>
<comment type="subunit">
    <text evidence="5">Homodimer.</text>
</comment>
<comment type="similarity">
    <text evidence="5">Belongs to the FPP/GGPP synthase family.</text>
</comment>
<gene>
    <name type="primary">sdsA</name>
    <name type="synonym">sds1</name>
</gene>
<keyword id="KW-0460">Magnesium</keyword>
<keyword id="KW-0479">Metal-binding</keyword>
<keyword id="KW-0808">Transferase</keyword>
<keyword id="KW-0831">Ubiquinone biosynthesis</keyword>
<sequence>MAIDFKQDILAPVAQDFAAMDQFINEGISSKVALVMSVSKHVVEAGGKRMRPIMCLLAAYACGETNLKHAQKLAAIIEMLHTATLVHDDVVDESGLRRGRPTANATWNNQTAVLVGDFLIARAFDLLVDLDNMILLKDFSTGTCEIAEGEVLQLQAQHQPDTTEDIYLQIIHGKTSRLFELATEGAAILAGKPEYREPLRRFAGHFGNAFQIIDDILDYTSDADTLGKNIGDDLMEGKPTLPLIAAMQNTQGEQRDLIRRSIATGGTSQLEQVIAIVQNSGALDYCHKRATEETERALQALEILPESTYRQALVNLTRLALDRIQ</sequence>
<protein>
    <recommendedName>
        <fullName>All-trans-nonaprenyl-diphosphate synthase (geranyl-diphosphate specific)</fullName>
        <ecNumber>2.5.1.84</ecNumber>
    </recommendedName>
    <alternativeName>
        <fullName>Solanesyl diphosphate synthase</fullName>
    </alternativeName>
</protein>
<reference key="1">
    <citation type="journal article" date="1997" name="J. Bacteriol.">
        <title>Cloning of the sdsA gene encoding solanesyl diphosphate synthase from Rhodobacter capsulatus and its functional expression in Escherichia coli and Saccharomyces cerevisiae.</title>
        <authorList>
            <person name="Okada K."/>
            <person name="Kamiya Y."/>
            <person name="Zhu X."/>
            <person name="Suzuki K."/>
            <person name="Tanaka K."/>
            <person name="Nakagawa T."/>
            <person name="Matsuda H."/>
            <person name="Kawamukai M."/>
        </authorList>
    </citation>
    <scope>NUCLEOTIDE SEQUENCE [GENOMIC DNA]</scope>
    <scope>FUNCTION AS A SOLANESYL DIPHOSPHATE SYNTHASE</scope>
    <scope>CATALYTIC ACTIVITY</scope>
    <scope>NOMENCLATURE</scope>
    <source>
        <strain>ATCC 23782 / LMG 2373 / NCIMB 11773 / St. Louis</strain>
    </source>
</reference>
<accession>O24743</accession>